<organism>
    <name type="scientific">Actinoplanes missouriensis</name>
    <dbReference type="NCBI Taxonomy" id="1866"/>
    <lineage>
        <taxon>Bacteria</taxon>
        <taxon>Bacillati</taxon>
        <taxon>Actinomycetota</taxon>
        <taxon>Actinomycetes</taxon>
        <taxon>Micromonosporales</taxon>
        <taxon>Micromonosporaceae</taxon>
        <taxon>Actinoplanes</taxon>
    </lineage>
</organism>
<dbReference type="EC" id="2.7.1.175"/>
<dbReference type="EMBL" id="AY327498">
    <property type="protein sequence ID" value="AAQ01690.1"/>
    <property type="molecule type" value="Genomic_DNA"/>
</dbReference>
<dbReference type="SMR" id="Q7WUM3"/>
<dbReference type="BRENDA" id="2.7.1.175">
    <property type="organism ID" value="141"/>
</dbReference>
<dbReference type="UniPathway" id="UPA00164"/>
<dbReference type="GO" id="GO:0005524">
    <property type="term" value="F:ATP binding"/>
    <property type="evidence" value="ECO:0007669"/>
    <property type="project" value="UniProtKB-KW"/>
</dbReference>
<dbReference type="GO" id="GO:0016301">
    <property type="term" value="F:kinase activity"/>
    <property type="evidence" value="ECO:0007669"/>
    <property type="project" value="UniProtKB-KW"/>
</dbReference>
<dbReference type="GO" id="GO:0046835">
    <property type="term" value="P:carbohydrate phosphorylation"/>
    <property type="evidence" value="ECO:0000314"/>
    <property type="project" value="UniProtKB"/>
</dbReference>
<dbReference type="GO" id="GO:0005978">
    <property type="term" value="P:glycogen biosynthetic process"/>
    <property type="evidence" value="ECO:0007669"/>
    <property type="project" value="UniProtKB-UniPathway"/>
</dbReference>
<dbReference type="GO" id="GO:0005992">
    <property type="term" value="P:trehalose biosynthetic process"/>
    <property type="evidence" value="ECO:0000314"/>
    <property type="project" value="UniProtKB"/>
</dbReference>
<dbReference type="FunFam" id="3.90.1200.10:FF:000010">
    <property type="entry name" value="Maltokinase"/>
    <property type="match status" value="1"/>
</dbReference>
<dbReference type="Gene3D" id="3.90.1200.10">
    <property type="match status" value="1"/>
</dbReference>
<dbReference type="InterPro" id="IPR011009">
    <property type="entry name" value="Kinase-like_dom_sf"/>
</dbReference>
<dbReference type="InterPro" id="IPR040999">
    <property type="entry name" value="Mak_N_cap"/>
</dbReference>
<dbReference type="Pfam" id="PF18085">
    <property type="entry name" value="Mak_N_cap"/>
    <property type="match status" value="1"/>
</dbReference>
<dbReference type="SUPFAM" id="SSF56112">
    <property type="entry name" value="Protein kinase-like (PK-like)"/>
    <property type="match status" value="1"/>
</dbReference>
<proteinExistence type="evidence at protein level"/>
<sequence>MTLPFAEWLPKQRWYAGRSRVLASVKEASATPLGEELDLVLVDVEYTDGSSERYQVMVGWGDGPLPEYSTIASIGTADDGRDGYDALYDPRATRHLLGLVDTSATAGDVTFEKEPGVELPLEAWPRVFDAEQSNTSVIFDEDAILKLFRRVTCGVNPDIELNRVLGRAGNPHVARLLGSLQSADDSGPCSLGMVTEYAANSAEGWAMATASARDLFADAEMRADEVGGDFQGESYRLGEAVASVHRTLAEELGTGPAPFPLDAVLARVRTAAAAVPELQQFVPAITARFEALTGAEVVVQRVHGDLHLGQVLRTPEAWLLIDFEGEPGQPLDERRMPDSPLRDVAGVLRSYEYAAYQLLVDQDDDEHLAARAREWVDRNRAAFCDGYTNVAGADPREQGALLSAYELDKAVYEAAYEARHRPGWLRIPLRSITRLVG</sequence>
<comment type="function">
    <text evidence="2">Catalyzes the ATP-dependent phosphorylation of maltose to maltose 1-phosphate. Only maltose acts effectively as phosphoryl-group acceptor, but maltotriose, maltotetraose, maltopentaose, and maltohexaose show a weak potential to replace maltose. ATP is not replaceable as phosphoryl-group donor.</text>
</comment>
<comment type="catalytic activity">
    <reaction evidence="2">
        <text>D-maltose + ATP = alpha-maltose 1-phosphate + ADP + H(+)</text>
        <dbReference type="Rhea" id="RHEA:31915"/>
        <dbReference type="ChEBI" id="CHEBI:15378"/>
        <dbReference type="ChEBI" id="CHEBI:17306"/>
        <dbReference type="ChEBI" id="CHEBI:30616"/>
        <dbReference type="ChEBI" id="CHEBI:63576"/>
        <dbReference type="ChEBI" id="CHEBI:456216"/>
        <dbReference type="EC" id="2.7.1.175"/>
    </reaction>
</comment>
<comment type="activity regulation">
    <text evidence="1">Inhibited by EDTA.</text>
</comment>
<comment type="biophysicochemical properties">
    <kinetics>
        <KM evidence="1">2.6 mM for maltose (at pH 8)</KM>
        <KM evidence="1">0.54 mM for ATP (at pH 8)</KM>
    </kinetics>
    <phDependence>
        <text evidence="1">Optimum pH is 8.5.</text>
    </phDependence>
    <temperatureDependence>
        <text evidence="1">Optimum temperature is 55 degrees Celsius. The enzyme activity decreases rapidly at temperatures above 60 degrees Celsius.</text>
    </temperatureDependence>
</comment>
<comment type="pathway">
    <text>Glycan biosynthesis; glycogen biosynthesis.</text>
</comment>
<comment type="subunit">
    <text evidence="1">Monomer.</text>
</comment>
<comment type="induction">
    <text evidence="3">Constitutively expressed.</text>
</comment>
<comment type="miscellaneous">
    <text>In the presence of 20 mM MgCl(2), the addition of CaCl(2), CoCl(2), FeSO(4), MnCl(2), BaCl(2) or CuCl(2) at a concentration of 1 mM to the enzyme assay led to a decrease of activity between 20% (FeSO(4)) and 83% (CoCl(2)).</text>
</comment>
<comment type="similarity">
    <text evidence="3">Belongs to the aminoglycoside phosphotransferase family.</text>
</comment>
<gene>
    <name type="primary">mak1</name>
</gene>
<evidence type="ECO:0000269" key="1">
    <source>
    </source>
</evidence>
<evidence type="ECO:0000269" key="2">
    <source>
    </source>
</evidence>
<evidence type="ECO:0000305" key="3"/>
<feature type="initiator methionine" description="Removed" evidence="1">
    <location>
        <position position="1"/>
    </location>
</feature>
<feature type="chain" id="PRO_0000412881" description="Maltokinase">
    <location>
        <begin position="2"/>
        <end position="437"/>
    </location>
</feature>
<protein>
    <recommendedName>
        <fullName>Maltokinase</fullName>
        <shortName>MaK</shortName>
        <ecNumber>2.7.1.175</ecNumber>
    </recommendedName>
    <alternativeName>
        <fullName>Maltose-1-phosphate synthase</fullName>
    </alternativeName>
</protein>
<reference key="1">
    <citation type="journal article" date="2004" name="J. Basic Microbiol.">
        <title>Isolation of mak1 from Actinoplanes missouriensis and evidence that Pep2 from Streptomyces coelicolor is a maltokinase.</title>
        <authorList>
            <person name="Jarling M."/>
            <person name="Cauvet T."/>
            <person name="Grundmeier M."/>
            <person name="Kuhnert K."/>
            <person name="Pape H."/>
        </authorList>
    </citation>
    <scope>NUCLEOTIDE SEQUENCE [GENOMIC DNA]</scope>
</reference>
<reference key="2">
    <citation type="journal article" date="1996" name="FEBS Lett.">
        <title>Maltokinase (ATP:maltose 1-phosphotransferase) from Actinoplanes sp.: demonstration of enzyme activity and characterization of the reaction product.</title>
        <authorList>
            <person name="Drepper A."/>
            <person name="Peitzmann R."/>
            <person name="Pape H."/>
        </authorList>
    </citation>
    <scope>FUNCTION AS A MALTOKINASE</scope>
    <scope>CATALYTIC ACTIVITY</scope>
</reference>
<reference key="3">
    <citation type="journal article" date="2003" name="Arch. Microbiol.">
        <title>Isolation and characterization of maltokinase (ATP:maltose 1-phosphotransferase) from Actinoplanes missouriensis.</title>
        <authorList>
            <person name="Niehues B."/>
            <person name="Jossek R."/>
            <person name="Kramer U."/>
            <person name="Koch A."/>
            <person name="Jarling M."/>
            <person name="Schroder W."/>
            <person name="Pape H."/>
        </authorList>
    </citation>
    <scope>PROTEIN SEQUENCE OF 2-25</scope>
    <scope>SUBSTRATE SPECIFICITY</scope>
    <scope>BIOPHYSICOCHEMICAL PROPERTIES</scope>
    <scope>ACTIVITY REGULATION</scope>
    <scope>SUBUNIT</scope>
</reference>
<name>MAK_ACTMI</name>
<accession>Q7WUM3</accession>
<keyword id="KW-0067">ATP-binding</keyword>
<keyword id="KW-0119">Carbohydrate metabolism</keyword>
<keyword id="KW-0903">Direct protein sequencing</keyword>
<keyword id="KW-0320">Glycogen biosynthesis</keyword>
<keyword id="KW-0321">Glycogen metabolism</keyword>
<keyword id="KW-0418">Kinase</keyword>
<keyword id="KW-0547">Nucleotide-binding</keyword>
<keyword id="KW-0808">Transferase</keyword>